<comment type="function">
    <text evidence="1">Ubiquitin-like modifier protein which binds to a number of as yet unidentified target proteins.</text>
</comment>
<comment type="similarity">
    <text evidence="3">Belongs to the UFM1 family.</text>
</comment>
<accession>Q7PXE2</accession>
<proteinExistence type="inferred from homology"/>
<name>UFM1_ANOGA</name>
<sequence>MAASKVTFKITLTSDPKLPFKVLSVPEATPFTAVLKFAAEEFKVPPATSAIITDDGIGINPQQTAGTVFLKHGSELRLIPRDRVGCRC</sequence>
<reference key="1">
    <citation type="journal article" date="2002" name="Science">
        <title>The genome sequence of the malaria mosquito Anopheles gambiae.</title>
        <authorList>
            <person name="Holt R.A."/>
            <person name="Subramanian G.M."/>
            <person name="Halpern A."/>
            <person name="Sutton G.G."/>
            <person name="Charlab R."/>
            <person name="Nusskern D.R."/>
            <person name="Wincker P."/>
            <person name="Clark A.G."/>
            <person name="Ribeiro J.M.C."/>
            <person name="Wides R."/>
            <person name="Salzberg S.L."/>
            <person name="Loftus B.J."/>
            <person name="Yandell M.D."/>
            <person name="Majoros W.H."/>
            <person name="Rusch D.B."/>
            <person name="Lai Z."/>
            <person name="Kraft C.L."/>
            <person name="Abril J.F."/>
            <person name="Anthouard V."/>
            <person name="Arensburger P."/>
            <person name="Atkinson P.W."/>
            <person name="Baden H."/>
            <person name="de Berardinis V."/>
            <person name="Baldwin D."/>
            <person name="Benes V."/>
            <person name="Biedler J."/>
            <person name="Blass C."/>
            <person name="Bolanos R."/>
            <person name="Boscus D."/>
            <person name="Barnstead M."/>
            <person name="Cai S."/>
            <person name="Center A."/>
            <person name="Chaturverdi K."/>
            <person name="Christophides G.K."/>
            <person name="Chrystal M.A.M."/>
            <person name="Clamp M."/>
            <person name="Cravchik A."/>
            <person name="Curwen V."/>
            <person name="Dana A."/>
            <person name="Delcher A."/>
            <person name="Dew I."/>
            <person name="Evans C.A."/>
            <person name="Flanigan M."/>
            <person name="Grundschober-Freimoser A."/>
            <person name="Friedli L."/>
            <person name="Gu Z."/>
            <person name="Guan P."/>
            <person name="Guigo R."/>
            <person name="Hillenmeyer M.E."/>
            <person name="Hladun S.L."/>
            <person name="Hogan J.R."/>
            <person name="Hong Y.S."/>
            <person name="Hoover J."/>
            <person name="Jaillon O."/>
            <person name="Ke Z."/>
            <person name="Kodira C.D."/>
            <person name="Kokoza E."/>
            <person name="Koutsos A."/>
            <person name="Letunic I."/>
            <person name="Levitsky A.A."/>
            <person name="Liang Y."/>
            <person name="Lin J.-J."/>
            <person name="Lobo N.F."/>
            <person name="Lopez J.R."/>
            <person name="Malek J.A."/>
            <person name="McIntosh T.C."/>
            <person name="Meister S."/>
            <person name="Miller J.R."/>
            <person name="Mobarry C."/>
            <person name="Mongin E."/>
            <person name="Murphy S.D."/>
            <person name="O'Brochta D.A."/>
            <person name="Pfannkoch C."/>
            <person name="Qi R."/>
            <person name="Regier M.A."/>
            <person name="Remington K."/>
            <person name="Shao H."/>
            <person name="Sharakhova M.V."/>
            <person name="Sitter C.D."/>
            <person name="Shetty J."/>
            <person name="Smith T.J."/>
            <person name="Strong R."/>
            <person name="Sun J."/>
            <person name="Thomasova D."/>
            <person name="Ton L.Q."/>
            <person name="Topalis P."/>
            <person name="Tu Z.J."/>
            <person name="Unger M.F."/>
            <person name="Walenz B."/>
            <person name="Wang A.H."/>
            <person name="Wang J."/>
            <person name="Wang M."/>
            <person name="Wang X."/>
            <person name="Woodford K.J."/>
            <person name="Wortman J.R."/>
            <person name="Wu M."/>
            <person name="Yao A."/>
            <person name="Zdobnov E.M."/>
            <person name="Zhang H."/>
            <person name="Zhao Q."/>
            <person name="Zhao S."/>
            <person name="Zhu S.C."/>
            <person name="Zhimulev I."/>
            <person name="Coluzzi M."/>
            <person name="della Torre A."/>
            <person name="Roth C.W."/>
            <person name="Louis C."/>
            <person name="Kalush F."/>
            <person name="Mural R.J."/>
            <person name="Myers E.W."/>
            <person name="Adams M.D."/>
            <person name="Smith H.O."/>
            <person name="Broder S."/>
            <person name="Gardner M.J."/>
            <person name="Fraser C.M."/>
            <person name="Birney E."/>
            <person name="Bork P."/>
            <person name="Brey P.T."/>
            <person name="Venter J.C."/>
            <person name="Weissenbach J."/>
            <person name="Kafatos F.C."/>
            <person name="Collins F.H."/>
            <person name="Hoffman S.L."/>
        </authorList>
    </citation>
    <scope>NUCLEOTIDE SEQUENCE [LARGE SCALE GENOMIC DNA]</scope>
    <source>
        <strain>PEST</strain>
    </source>
</reference>
<evidence type="ECO:0000250" key="1"/>
<evidence type="ECO:0000255" key="2"/>
<evidence type="ECO:0000305" key="3"/>
<keyword id="KW-1017">Isopeptide bond</keyword>
<keyword id="KW-1185">Reference proteome</keyword>
<keyword id="KW-0833">Ubl conjugation pathway</keyword>
<organism>
    <name type="scientific">Anopheles gambiae</name>
    <name type="common">African malaria mosquito</name>
    <dbReference type="NCBI Taxonomy" id="7165"/>
    <lineage>
        <taxon>Eukaryota</taxon>
        <taxon>Metazoa</taxon>
        <taxon>Ecdysozoa</taxon>
        <taxon>Arthropoda</taxon>
        <taxon>Hexapoda</taxon>
        <taxon>Insecta</taxon>
        <taxon>Pterygota</taxon>
        <taxon>Neoptera</taxon>
        <taxon>Endopterygota</taxon>
        <taxon>Diptera</taxon>
        <taxon>Nematocera</taxon>
        <taxon>Culicoidea</taxon>
        <taxon>Culicidae</taxon>
        <taxon>Anophelinae</taxon>
        <taxon>Anopheles</taxon>
    </lineage>
</organism>
<protein>
    <recommendedName>
        <fullName>Ubiquitin-fold modifier 1</fullName>
    </recommendedName>
</protein>
<feature type="chain" id="PRO_0000391993" description="Ubiquitin-fold modifier 1">
    <location>
        <begin position="1"/>
        <end position="85"/>
    </location>
</feature>
<feature type="propeptide" id="PRO_0000391994" description="Removed in mature form" evidence="1">
    <location>
        <begin position="86"/>
        <end position="88"/>
    </location>
</feature>
<feature type="cross-link" description="Glycyl lysine isopeptide (Gly-Lys) (interchain with K-? in acceptor proteins)" evidence="2">
    <location>
        <position position="85"/>
    </location>
</feature>
<gene>
    <name type="ORF">AGAP001364</name>
</gene>
<dbReference type="EMBL" id="AAAB01008987">
    <property type="protein sequence ID" value="EAA01133.3"/>
    <property type="molecule type" value="Genomic_DNA"/>
</dbReference>
<dbReference type="SMR" id="Q7PXE2"/>
<dbReference type="FunCoup" id="Q7PXE2">
    <property type="interactions" value="1073"/>
</dbReference>
<dbReference type="STRING" id="7165.Q7PXE2"/>
<dbReference type="PaxDb" id="7165-AGAP001364-PA"/>
<dbReference type="EnsemblMetazoa" id="AGAP001364-RA">
    <property type="protein sequence ID" value="AGAP001364-PA"/>
    <property type="gene ID" value="AGAP001364"/>
</dbReference>
<dbReference type="GeneID" id="1281818"/>
<dbReference type="KEGG" id="aga:1281818"/>
<dbReference type="CTD" id="51569"/>
<dbReference type="VEuPathDB" id="VectorBase:AGAMI1_000376"/>
<dbReference type="VEuPathDB" id="VectorBase:AGAP001364"/>
<dbReference type="eggNOG" id="KOG3483">
    <property type="taxonomic scope" value="Eukaryota"/>
</dbReference>
<dbReference type="HOGENOM" id="CLU_175114_0_0_1"/>
<dbReference type="InParanoid" id="Q7PXE2"/>
<dbReference type="OMA" id="MEHAVGK"/>
<dbReference type="PhylomeDB" id="Q7PXE2"/>
<dbReference type="Proteomes" id="UP000007062">
    <property type="component" value="Chromosome 2R"/>
</dbReference>
<dbReference type="GO" id="GO:0005737">
    <property type="term" value="C:cytoplasm"/>
    <property type="evidence" value="ECO:0000318"/>
    <property type="project" value="GO_Central"/>
</dbReference>
<dbReference type="GO" id="GO:0005634">
    <property type="term" value="C:nucleus"/>
    <property type="evidence" value="ECO:0000318"/>
    <property type="project" value="GO_Central"/>
</dbReference>
<dbReference type="GO" id="GO:0071569">
    <property type="term" value="P:protein ufmylation"/>
    <property type="evidence" value="ECO:0007669"/>
    <property type="project" value="InterPro"/>
</dbReference>
<dbReference type="GO" id="GO:0034976">
    <property type="term" value="P:response to endoplasmic reticulum stress"/>
    <property type="evidence" value="ECO:0000318"/>
    <property type="project" value="GO_Central"/>
</dbReference>
<dbReference type="GO" id="GO:0061709">
    <property type="term" value="P:reticulophagy"/>
    <property type="evidence" value="ECO:0000318"/>
    <property type="project" value="GO_Central"/>
</dbReference>
<dbReference type="CDD" id="cd01766">
    <property type="entry name" value="Ubl_UFM1"/>
    <property type="match status" value="1"/>
</dbReference>
<dbReference type="FunFam" id="3.10.20.90:FF:000044">
    <property type="entry name" value="Ubiquitin-fold modifier 1"/>
    <property type="match status" value="1"/>
</dbReference>
<dbReference type="Gene3D" id="3.10.20.90">
    <property type="entry name" value="Phosphatidylinositol 3-kinase Catalytic Subunit, Chain A, domain 1"/>
    <property type="match status" value="1"/>
</dbReference>
<dbReference type="InterPro" id="IPR029071">
    <property type="entry name" value="Ubiquitin-like_domsf"/>
</dbReference>
<dbReference type="InterPro" id="IPR005375">
    <property type="entry name" value="UFM1"/>
</dbReference>
<dbReference type="PANTHER" id="PTHR15825">
    <property type="entry name" value="UBIQUITIN-FOLD MODIFIER 1"/>
    <property type="match status" value="1"/>
</dbReference>
<dbReference type="PANTHER" id="PTHR15825:SF0">
    <property type="entry name" value="UBIQUITIN-FOLD MODIFIER 1"/>
    <property type="match status" value="1"/>
</dbReference>
<dbReference type="Pfam" id="PF03671">
    <property type="entry name" value="Ufm1"/>
    <property type="match status" value="1"/>
</dbReference>
<dbReference type="PIRSF" id="PIRSF038027">
    <property type="entry name" value="Ubiquitin-like_Ufm1"/>
    <property type="match status" value="1"/>
</dbReference>
<dbReference type="SUPFAM" id="SSF54236">
    <property type="entry name" value="Ubiquitin-like"/>
    <property type="match status" value="1"/>
</dbReference>